<comment type="function">
    <text evidence="1">Involved in sporulation. Plays a significant role in modification of the spindle pole body prior to spore formation and is required for initiating forespore membrane formation. Assists in the localization of spo13 to the outer surface of the SPB.</text>
</comment>
<comment type="subunit">
    <text evidence="1">Interacts with spo13 and spo15.</text>
</comment>
<comment type="subcellular location">
    <subcellularLocation>
        <location evidence="1">Cytoplasm</location>
        <location evidence="1">Cytoskeleton</location>
        <location evidence="1">Microtubule organizing center</location>
        <location evidence="1">Spindle pole body</location>
    </subcellularLocation>
</comment>
<comment type="induction">
    <text evidence="1">Induced during meiosis by the transcription factor mei4. Protein levels rapidly increase during meiosis and then decline.</text>
</comment>
<comment type="miscellaneous">
    <text>The sequence is 100 percent identical to the C-terminus of vps13b.</text>
</comment>
<comment type="similarity">
    <text evidence="2">Belongs to the VPS13 family.</text>
</comment>
<sequence length="133" mass="15577">MSITMSDSSAYGEELMRERFEHLLKAYEKMALMVAEQEEFNAKIEDMALKLLSEKYDNEAYQAELFYRLSNCVEKVLHNKISITDLKTEYEEILEQTLKKECKAYERSCIENVKLKKRTEQATAYYASSSSEP</sequence>
<reference key="1">
    <citation type="journal article" date="2002" name="Nature">
        <title>The genome sequence of Schizosaccharomyces pombe.</title>
        <authorList>
            <person name="Wood V."/>
            <person name="Gwilliam R."/>
            <person name="Rajandream M.A."/>
            <person name="Lyne M.H."/>
            <person name="Lyne R."/>
            <person name="Stewart A."/>
            <person name="Sgouros J.G."/>
            <person name="Peat N."/>
            <person name="Hayles J."/>
            <person name="Baker S.G."/>
            <person name="Basham D."/>
            <person name="Bowman S."/>
            <person name="Brooks K."/>
            <person name="Brown D."/>
            <person name="Brown S."/>
            <person name="Chillingworth T."/>
            <person name="Churcher C.M."/>
            <person name="Collins M."/>
            <person name="Connor R."/>
            <person name="Cronin A."/>
            <person name="Davis P."/>
            <person name="Feltwell T."/>
            <person name="Fraser A."/>
            <person name="Gentles S."/>
            <person name="Goble A."/>
            <person name="Hamlin N."/>
            <person name="Harris D.E."/>
            <person name="Hidalgo J."/>
            <person name="Hodgson G."/>
            <person name="Holroyd S."/>
            <person name="Hornsby T."/>
            <person name="Howarth S."/>
            <person name="Huckle E.J."/>
            <person name="Hunt S."/>
            <person name="Jagels K."/>
            <person name="James K.D."/>
            <person name="Jones L."/>
            <person name="Jones M."/>
            <person name="Leather S."/>
            <person name="McDonald S."/>
            <person name="McLean J."/>
            <person name="Mooney P."/>
            <person name="Moule S."/>
            <person name="Mungall K.L."/>
            <person name="Murphy L.D."/>
            <person name="Niblett D."/>
            <person name="Odell C."/>
            <person name="Oliver K."/>
            <person name="O'Neil S."/>
            <person name="Pearson D."/>
            <person name="Quail M.A."/>
            <person name="Rabbinowitsch E."/>
            <person name="Rutherford K.M."/>
            <person name="Rutter S."/>
            <person name="Saunders D."/>
            <person name="Seeger K."/>
            <person name="Sharp S."/>
            <person name="Skelton J."/>
            <person name="Simmonds M.N."/>
            <person name="Squares R."/>
            <person name="Squares S."/>
            <person name="Stevens K."/>
            <person name="Taylor K."/>
            <person name="Taylor R.G."/>
            <person name="Tivey A."/>
            <person name="Walsh S.V."/>
            <person name="Warren T."/>
            <person name="Whitehead S."/>
            <person name="Woodward J.R."/>
            <person name="Volckaert G."/>
            <person name="Aert R."/>
            <person name="Robben J."/>
            <person name="Grymonprez B."/>
            <person name="Weltjens I."/>
            <person name="Vanstreels E."/>
            <person name="Rieger M."/>
            <person name="Schaefer M."/>
            <person name="Mueller-Auer S."/>
            <person name="Gabel C."/>
            <person name="Fuchs M."/>
            <person name="Duesterhoeft A."/>
            <person name="Fritzc C."/>
            <person name="Holzer E."/>
            <person name="Moestl D."/>
            <person name="Hilbert H."/>
            <person name="Borzym K."/>
            <person name="Langer I."/>
            <person name="Beck A."/>
            <person name="Lehrach H."/>
            <person name="Reinhardt R."/>
            <person name="Pohl T.M."/>
            <person name="Eger P."/>
            <person name="Zimmermann W."/>
            <person name="Wedler H."/>
            <person name="Wambutt R."/>
            <person name="Purnelle B."/>
            <person name="Goffeau A."/>
            <person name="Cadieu E."/>
            <person name="Dreano S."/>
            <person name="Gloux S."/>
            <person name="Lelaure V."/>
            <person name="Mottier S."/>
            <person name="Galibert F."/>
            <person name="Aves S.J."/>
            <person name="Xiang Z."/>
            <person name="Hunt C."/>
            <person name="Moore K."/>
            <person name="Hurst S.M."/>
            <person name="Lucas M."/>
            <person name="Rochet M."/>
            <person name="Gaillardin C."/>
            <person name="Tallada V.A."/>
            <person name="Garzon A."/>
            <person name="Thode G."/>
            <person name="Daga R.R."/>
            <person name="Cruzado L."/>
            <person name="Jimenez J."/>
            <person name="Sanchez M."/>
            <person name="del Rey F."/>
            <person name="Benito J."/>
            <person name="Dominguez A."/>
            <person name="Revuelta J.L."/>
            <person name="Moreno S."/>
            <person name="Armstrong J."/>
            <person name="Forsburg S.L."/>
            <person name="Cerutti L."/>
            <person name="Lowe T."/>
            <person name="McCombie W.R."/>
            <person name="Paulsen I."/>
            <person name="Potashkin J."/>
            <person name="Shpakovski G.V."/>
            <person name="Ussery D."/>
            <person name="Barrell B.G."/>
            <person name="Nurse P."/>
        </authorList>
    </citation>
    <scope>NUCLEOTIDE SEQUENCE [LARGE SCALE GENOMIC DNA]</scope>
    <source>
        <strain>972 / ATCC 24843</strain>
    </source>
</reference>
<reference key="2">
    <citation type="journal article" date="2008" name="Mol. Biol. Cell">
        <title>Meiotic spindle pole bodies acquire the ability to assemble the spore plasma membrane by sequential recruitment of sporulation-specific components in fission yeast.</title>
        <authorList>
            <person name="Nakase Y."/>
            <person name="Nakamura-Kubo M."/>
            <person name="Ye Y."/>
            <person name="Hirata A."/>
            <person name="Shimoda C."/>
            <person name="Nakamura T."/>
        </authorList>
    </citation>
    <scope>FUNCTION</scope>
    <scope>INDUCTION</scope>
    <scope>SUBCELLULAR LOCATION</scope>
    <scope>INTERACTION WITH SPO13 AND SPO15</scope>
</reference>
<dbReference type="EMBL" id="CU329671">
    <property type="protein sequence ID" value="CBA11512.1"/>
    <property type="molecule type" value="Genomic_DNA"/>
</dbReference>
<dbReference type="RefSeq" id="XP_002788944.1">
    <property type="nucleotide sequence ID" value="XM_002788898.2"/>
</dbReference>
<dbReference type="SMR" id="C6Y4C2"/>
<dbReference type="BioGRID" id="1028587">
    <property type="interactions" value="3"/>
</dbReference>
<dbReference type="STRING" id="284812.C6Y4C2"/>
<dbReference type="PaxDb" id="4896-SPBC16C6.14.1"/>
<dbReference type="EnsemblFungi" id="SPBC16C6.14.1">
    <property type="protein sequence ID" value="SPBC16C6.14.1:pep"/>
    <property type="gene ID" value="SPBC16C6.14"/>
</dbReference>
<dbReference type="PomBase" id="SPBC16C6.14">
    <property type="gene designation" value="spo2"/>
</dbReference>
<dbReference type="VEuPathDB" id="FungiDB:SPBC16C6.14"/>
<dbReference type="eggNOG" id="KOG1809">
    <property type="taxonomic scope" value="Eukaryota"/>
</dbReference>
<dbReference type="HOGENOM" id="CLU_1907899_0_0_1"/>
<dbReference type="InParanoid" id="C6Y4C2"/>
<dbReference type="OMA" id="ERSCIEN"/>
<dbReference type="PRO" id="PR:C6Y4C2"/>
<dbReference type="Proteomes" id="UP000002485">
    <property type="component" value="Chromosome II"/>
</dbReference>
<dbReference type="GO" id="GO:0005737">
    <property type="term" value="C:cytoplasm"/>
    <property type="evidence" value="ECO:0007669"/>
    <property type="project" value="UniProtKB-KW"/>
</dbReference>
<dbReference type="GO" id="GO:0035974">
    <property type="term" value="C:meiotic spindle pole body"/>
    <property type="evidence" value="ECO:0000314"/>
    <property type="project" value="PomBase"/>
</dbReference>
<dbReference type="GO" id="GO:0030437">
    <property type="term" value="P:ascospore formation"/>
    <property type="evidence" value="ECO:0000315"/>
    <property type="project" value="PomBase"/>
</dbReference>
<dbReference type="GO" id="GO:0031322">
    <property type="term" value="P:ascospore-type prospore-specific spindle pole body remodeling"/>
    <property type="evidence" value="ECO:0000315"/>
    <property type="project" value="PomBase"/>
</dbReference>
<proteinExistence type="evidence at protein level"/>
<protein>
    <recommendedName>
        <fullName>Sporulation-specific protein 2</fullName>
    </recommendedName>
</protein>
<accession>C6Y4C2</accession>
<organism>
    <name type="scientific">Schizosaccharomyces pombe (strain 972 / ATCC 24843)</name>
    <name type="common">Fission yeast</name>
    <dbReference type="NCBI Taxonomy" id="284812"/>
    <lineage>
        <taxon>Eukaryota</taxon>
        <taxon>Fungi</taxon>
        <taxon>Dikarya</taxon>
        <taxon>Ascomycota</taxon>
        <taxon>Taphrinomycotina</taxon>
        <taxon>Schizosaccharomycetes</taxon>
        <taxon>Schizosaccharomycetales</taxon>
        <taxon>Schizosaccharomycetaceae</taxon>
        <taxon>Schizosaccharomyces</taxon>
    </lineage>
</organism>
<keyword id="KW-0963">Cytoplasm</keyword>
<keyword id="KW-0206">Cytoskeleton</keyword>
<keyword id="KW-0469">Meiosis</keyword>
<keyword id="KW-1185">Reference proteome</keyword>
<keyword id="KW-0749">Sporulation</keyword>
<feature type="chain" id="PRO_0000389117" description="Sporulation-specific protein 2">
    <location>
        <begin position="1"/>
        <end position="133"/>
    </location>
</feature>
<gene>
    <name type="primary">spo2</name>
    <name type="ORF">SPBC16C6.14</name>
</gene>
<name>SPO2_SCHPO</name>
<evidence type="ECO:0000269" key="1">
    <source>
    </source>
</evidence>
<evidence type="ECO:0000305" key="2"/>